<evidence type="ECO:0000250" key="1"/>
<evidence type="ECO:0000255" key="2">
    <source>
        <dbReference type="PROSITE-ProRule" id="PRU00296"/>
    </source>
</evidence>
<evidence type="ECO:0000305" key="3"/>
<accession>P9WMH0</accession>
<accession>L0TC16</accession>
<accession>O08190</accession>
<accession>P0A672</accession>
<accession>Q50495</accession>
<gene>
    <name type="primary">ideR</name>
    <name type="synonym">dtxR</name>
    <name type="ordered locus">MT2784</name>
</gene>
<feature type="chain" id="PRO_0000427305" description="Iron-dependent repressor IdeR">
    <location>
        <begin position="1"/>
        <end position="230"/>
    </location>
</feature>
<feature type="domain" description="HTH dtxR-type" evidence="2">
    <location>
        <begin position="4"/>
        <end position="65"/>
    </location>
</feature>
<sequence length="230" mass="25233">MNELVDTTEMYLRTIYDLEEEGVTPLRARIAERLDQSGPTVSQTVSRMERDGLLRVAGDRHLELTEKGRALAIAVMRKHRLAERLLVDVIGLPWEEVHAEACRWEHVMSEDVERRLVKVLNNPTTSPFGNPIPGLVELGVGPEPGADDANLVRLTELPAGSPVAVVVRQLTEHVQGDIDLITRLKDAGVVPNARVTVETTPGGGVTIVIPGHENVTLPHEMAHAVKVEKV</sequence>
<comment type="function">
    <text evidence="1">Metal-dependent DNA-binding protein that controls transcription of many genes involved in iron metabolism. Acts as a repressor of siderophore biosynthesis and as a positive modulator of iron storage. Also regulates expression of transporters, proteins involved in siderophore synthesis, iron storage and transcriptional regulators (By similarity).</text>
</comment>
<comment type="subunit">
    <text evidence="1">Homodimer.</text>
</comment>
<comment type="subcellular location">
    <subcellularLocation>
        <location evidence="1">Cytoplasm</location>
    </subcellularLocation>
</comment>
<comment type="similarity">
    <text evidence="3">Belongs to the DtxR/MntR family.</text>
</comment>
<organism>
    <name type="scientific">Mycobacterium tuberculosis (strain CDC 1551 / Oshkosh)</name>
    <dbReference type="NCBI Taxonomy" id="83331"/>
    <lineage>
        <taxon>Bacteria</taxon>
        <taxon>Bacillati</taxon>
        <taxon>Actinomycetota</taxon>
        <taxon>Actinomycetes</taxon>
        <taxon>Mycobacteriales</taxon>
        <taxon>Mycobacteriaceae</taxon>
        <taxon>Mycobacterium</taxon>
        <taxon>Mycobacterium tuberculosis complex</taxon>
    </lineage>
</organism>
<proteinExistence type="inferred from homology"/>
<dbReference type="EMBL" id="AE000516">
    <property type="protein sequence ID" value="AAK47100.1"/>
    <property type="molecule type" value="Genomic_DNA"/>
</dbReference>
<dbReference type="PIR" id="B70532">
    <property type="entry name" value="B70532"/>
</dbReference>
<dbReference type="RefSeq" id="WP_003413962.1">
    <property type="nucleotide sequence ID" value="NZ_KK341227.1"/>
</dbReference>
<dbReference type="SMR" id="P9WMH0"/>
<dbReference type="GeneID" id="45426698"/>
<dbReference type="KEGG" id="mtc:MT2784"/>
<dbReference type="PATRIC" id="fig|83331.31.peg.2997"/>
<dbReference type="HOGENOM" id="CLU_069532_0_0_11"/>
<dbReference type="Proteomes" id="UP000001020">
    <property type="component" value="Chromosome"/>
</dbReference>
<dbReference type="GO" id="GO:0005737">
    <property type="term" value="C:cytoplasm"/>
    <property type="evidence" value="ECO:0007669"/>
    <property type="project" value="UniProtKB-SubCell"/>
</dbReference>
<dbReference type="GO" id="GO:0003677">
    <property type="term" value="F:DNA binding"/>
    <property type="evidence" value="ECO:0007669"/>
    <property type="project" value="UniProtKB-KW"/>
</dbReference>
<dbReference type="GO" id="GO:0003700">
    <property type="term" value="F:DNA-binding transcription factor activity"/>
    <property type="evidence" value="ECO:0007669"/>
    <property type="project" value="InterPro"/>
</dbReference>
<dbReference type="GO" id="GO:0046983">
    <property type="term" value="F:protein dimerization activity"/>
    <property type="evidence" value="ECO:0007669"/>
    <property type="project" value="InterPro"/>
</dbReference>
<dbReference type="GO" id="GO:0046914">
    <property type="term" value="F:transition metal ion binding"/>
    <property type="evidence" value="ECO:0007669"/>
    <property type="project" value="InterPro"/>
</dbReference>
<dbReference type="GO" id="GO:0045892">
    <property type="term" value="P:negative regulation of DNA-templated transcription"/>
    <property type="evidence" value="ECO:0007669"/>
    <property type="project" value="TreeGrafter"/>
</dbReference>
<dbReference type="FunFam" id="1.10.60.10:FF:000001">
    <property type="entry name" value="Iron dependent repressor"/>
    <property type="match status" value="1"/>
</dbReference>
<dbReference type="FunFam" id="1.10.10.10:FF:000067">
    <property type="entry name" value="Iron-dependent repressor IdeR"/>
    <property type="match status" value="1"/>
</dbReference>
<dbReference type="FunFam" id="2.30.30.90:FF:000002">
    <property type="entry name" value="Iron-dependent repressor IdeR"/>
    <property type="match status" value="1"/>
</dbReference>
<dbReference type="Gene3D" id="2.30.30.90">
    <property type="match status" value="1"/>
</dbReference>
<dbReference type="Gene3D" id="1.10.60.10">
    <property type="entry name" value="Iron dependent repressor, metal binding and dimerisation domain"/>
    <property type="match status" value="1"/>
</dbReference>
<dbReference type="Gene3D" id="1.10.10.10">
    <property type="entry name" value="Winged helix-like DNA-binding domain superfamily/Winged helix DNA-binding domain"/>
    <property type="match status" value="1"/>
</dbReference>
<dbReference type="InterPro" id="IPR040767">
    <property type="entry name" value="DtxR/IdeR_SH3"/>
</dbReference>
<dbReference type="InterPro" id="IPR050536">
    <property type="entry name" value="DtxR_MntR_Metal-Reg"/>
</dbReference>
<dbReference type="InterPro" id="IPR007167">
    <property type="entry name" value="Fe-transptr_FeoA-like"/>
</dbReference>
<dbReference type="InterPro" id="IPR001367">
    <property type="entry name" value="Fe_dep_repressor"/>
</dbReference>
<dbReference type="InterPro" id="IPR036421">
    <property type="entry name" value="Fe_dep_repressor_sf"/>
</dbReference>
<dbReference type="InterPro" id="IPR038157">
    <property type="entry name" value="FeoA_core_dom"/>
</dbReference>
<dbReference type="InterPro" id="IPR022687">
    <property type="entry name" value="HTH_DTXR"/>
</dbReference>
<dbReference type="InterPro" id="IPR022689">
    <property type="entry name" value="Iron_dep_repressor"/>
</dbReference>
<dbReference type="InterPro" id="IPR008988">
    <property type="entry name" value="Transcriptional_repressor_C"/>
</dbReference>
<dbReference type="InterPro" id="IPR036388">
    <property type="entry name" value="WH-like_DNA-bd_sf"/>
</dbReference>
<dbReference type="InterPro" id="IPR036390">
    <property type="entry name" value="WH_DNA-bd_sf"/>
</dbReference>
<dbReference type="PANTHER" id="PTHR33238">
    <property type="entry name" value="IRON (METAL) DEPENDENT REPRESSOR, DTXR FAMILY"/>
    <property type="match status" value="1"/>
</dbReference>
<dbReference type="PANTHER" id="PTHR33238:SF10">
    <property type="entry name" value="IRON-DEPENDENT REPRESSOR IDER"/>
    <property type="match status" value="1"/>
</dbReference>
<dbReference type="Pfam" id="PF18357">
    <property type="entry name" value="DtxR"/>
    <property type="match status" value="1"/>
</dbReference>
<dbReference type="Pfam" id="PF02742">
    <property type="entry name" value="Fe_dep_repr_C"/>
    <property type="match status" value="1"/>
</dbReference>
<dbReference type="Pfam" id="PF01325">
    <property type="entry name" value="Fe_dep_repress"/>
    <property type="match status" value="1"/>
</dbReference>
<dbReference type="SMART" id="SM00899">
    <property type="entry name" value="FeoA"/>
    <property type="match status" value="1"/>
</dbReference>
<dbReference type="SMART" id="SM00529">
    <property type="entry name" value="HTH_DTXR"/>
    <property type="match status" value="1"/>
</dbReference>
<dbReference type="SUPFAM" id="SSF50037">
    <property type="entry name" value="C-terminal domain of transcriptional repressors"/>
    <property type="match status" value="1"/>
</dbReference>
<dbReference type="SUPFAM" id="SSF47979">
    <property type="entry name" value="Iron-dependent repressor protein, dimerization domain"/>
    <property type="match status" value="1"/>
</dbReference>
<dbReference type="SUPFAM" id="SSF46785">
    <property type="entry name" value="Winged helix' DNA-binding domain"/>
    <property type="match status" value="1"/>
</dbReference>
<dbReference type="PROSITE" id="PS50944">
    <property type="entry name" value="HTH_DTXR"/>
    <property type="match status" value="1"/>
</dbReference>
<reference key="1">
    <citation type="journal article" date="2002" name="J. Bacteriol.">
        <title>Whole-genome comparison of Mycobacterium tuberculosis clinical and laboratory strains.</title>
        <authorList>
            <person name="Fleischmann R.D."/>
            <person name="Alland D."/>
            <person name="Eisen J.A."/>
            <person name="Carpenter L."/>
            <person name="White O."/>
            <person name="Peterson J.D."/>
            <person name="DeBoy R.T."/>
            <person name="Dodson R.J."/>
            <person name="Gwinn M.L."/>
            <person name="Haft D.H."/>
            <person name="Hickey E.K."/>
            <person name="Kolonay J.F."/>
            <person name="Nelson W.C."/>
            <person name="Umayam L.A."/>
            <person name="Ermolaeva M.D."/>
            <person name="Salzberg S.L."/>
            <person name="Delcher A."/>
            <person name="Utterback T.R."/>
            <person name="Weidman J.F."/>
            <person name="Khouri H.M."/>
            <person name="Gill J."/>
            <person name="Mikula A."/>
            <person name="Bishai W."/>
            <person name="Jacobs W.R. Jr."/>
            <person name="Venter J.C."/>
            <person name="Fraser C.M."/>
        </authorList>
    </citation>
    <scope>NUCLEOTIDE SEQUENCE [LARGE SCALE GENOMIC DNA]</scope>
    <source>
        <strain>CDC 1551 / Oshkosh</strain>
    </source>
</reference>
<name>IDER_MYCTO</name>
<protein>
    <recommendedName>
        <fullName>Iron-dependent repressor IdeR</fullName>
    </recommendedName>
</protein>
<keyword id="KW-0010">Activator</keyword>
<keyword id="KW-0963">Cytoplasm</keyword>
<keyword id="KW-0238">DNA-binding</keyword>
<keyword id="KW-0408">Iron</keyword>
<keyword id="KW-1185">Reference proteome</keyword>
<keyword id="KW-0678">Repressor</keyword>
<keyword id="KW-0804">Transcription</keyword>
<keyword id="KW-0805">Transcription regulation</keyword>